<organism>
    <name type="scientific">Brucella melitensis biotype 1 (strain ATCC 23456 / CCUG 17765 / NCTC 10094 / 16M)</name>
    <dbReference type="NCBI Taxonomy" id="224914"/>
    <lineage>
        <taxon>Bacteria</taxon>
        <taxon>Pseudomonadati</taxon>
        <taxon>Pseudomonadota</taxon>
        <taxon>Alphaproteobacteria</taxon>
        <taxon>Hyphomicrobiales</taxon>
        <taxon>Brucellaceae</taxon>
        <taxon>Brucella/Ochrobactrum group</taxon>
        <taxon>Brucella</taxon>
    </lineage>
</organism>
<accession>Q8YGI8</accession>
<comment type="function">
    <text evidence="1">Catalyzes the NADPH-dependent reduction of N-acetyl-5-glutamyl phosphate to yield N-acetyl-L-glutamate 5-semialdehyde.</text>
</comment>
<comment type="catalytic activity">
    <reaction evidence="1">
        <text>N-acetyl-L-glutamate 5-semialdehyde + phosphate + NADP(+) = N-acetyl-L-glutamyl 5-phosphate + NADPH + H(+)</text>
        <dbReference type="Rhea" id="RHEA:21588"/>
        <dbReference type="ChEBI" id="CHEBI:15378"/>
        <dbReference type="ChEBI" id="CHEBI:29123"/>
        <dbReference type="ChEBI" id="CHEBI:43474"/>
        <dbReference type="ChEBI" id="CHEBI:57783"/>
        <dbReference type="ChEBI" id="CHEBI:57936"/>
        <dbReference type="ChEBI" id="CHEBI:58349"/>
        <dbReference type="EC" id="1.2.1.38"/>
    </reaction>
</comment>
<comment type="pathway">
    <text evidence="1">Amino-acid biosynthesis; L-arginine biosynthesis; N(2)-acetyl-L-ornithine from L-glutamate: step 3/4.</text>
</comment>
<comment type="subcellular location">
    <subcellularLocation>
        <location evidence="1">Cytoplasm</location>
    </subcellularLocation>
</comment>
<comment type="similarity">
    <text evidence="1">Belongs to the NAGSA dehydrogenase family. Type 2 subfamily.</text>
</comment>
<proteinExistence type="inferred from homology"/>
<dbReference type="EC" id="1.2.1.38" evidence="1"/>
<dbReference type="EMBL" id="AE008917">
    <property type="protein sequence ID" value="AAL52352.1"/>
    <property type="molecule type" value="Genomic_DNA"/>
</dbReference>
<dbReference type="PIR" id="AE3398">
    <property type="entry name" value="AE3398"/>
</dbReference>
<dbReference type="RefSeq" id="WP_004683593.1">
    <property type="nucleotide sequence ID" value="NZ_GG703778.1"/>
</dbReference>
<dbReference type="SMR" id="Q8YGI8"/>
<dbReference type="GeneID" id="29594009"/>
<dbReference type="KEGG" id="bme:BMEI1171"/>
<dbReference type="KEGG" id="bmel:DK63_240"/>
<dbReference type="PATRIC" id="fig|224914.52.peg.249"/>
<dbReference type="eggNOG" id="COG0002">
    <property type="taxonomic scope" value="Bacteria"/>
</dbReference>
<dbReference type="PhylomeDB" id="Q8YGI8"/>
<dbReference type="UniPathway" id="UPA00068">
    <property type="reaction ID" value="UER00108"/>
</dbReference>
<dbReference type="Proteomes" id="UP000000419">
    <property type="component" value="Chromosome I"/>
</dbReference>
<dbReference type="GO" id="GO:0005737">
    <property type="term" value="C:cytoplasm"/>
    <property type="evidence" value="ECO:0007669"/>
    <property type="project" value="UniProtKB-SubCell"/>
</dbReference>
<dbReference type="GO" id="GO:0003942">
    <property type="term" value="F:N-acetyl-gamma-glutamyl-phosphate reductase activity"/>
    <property type="evidence" value="ECO:0007669"/>
    <property type="project" value="UniProtKB-UniRule"/>
</dbReference>
<dbReference type="GO" id="GO:0051287">
    <property type="term" value="F:NAD binding"/>
    <property type="evidence" value="ECO:0007669"/>
    <property type="project" value="InterPro"/>
</dbReference>
<dbReference type="GO" id="GO:0006526">
    <property type="term" value="P:L-arginine biosynthetic process"/>
    <property type="evidence" value="ECO:0007669"/>
    <property type="project" value="UniProtKB-UniRule"/>
</dbReference>
<dbReference type="CDD" id="cd23935">
    <property type="entry name" value="AGPR_2_C"/>
    <property type="match status" value="1"/>
</dbReference>
<dbReference type="CDD" id="cd17896">
    <property type="entry name" value="AGPR_2_N"/>
    <property type="match status" value="1"/>
</dbReference>
<dbReference type="Gene3D" id="3.30.360.10">
    <property type="entry name" value="Dihydrodipicolinate Reductase, domain 2"/>
    <property type="match status" value="1"/>
</dbReference>
<dbReference type="Gene3D" id="3.40.50.720">
    <property type="entry name" value="NAD(P)-binding Rossmann-like Domain"/>
    <property type="match status" value="1"/>
</dbReference>
<dbReference type="HAMAP" id="MF_01110">
    <property type="entry name" value="ArgC_type2"/>
    <property type="match status" value="1"/>
</dbReference>
<dbReference type="InterPro" id="IPR023013">
    <property type="entry name" value="AGPR_AS"/>
</dbReference>
<dbReference type="InterPro" id="IPR010136">
    <property type="entry name" value="AGPR_type-2"/>
</dbReference>
<dbReference type="InterPro" id="IPR036291">
    <property type="entry name" value="NAD(P)-bd_dom_sf"/>
</dbReference>
<dbReference type="InterPro" id="IPR050085">
    <property type="entry name" value="NAGSA_dehydrogenase"/>
</dbReference>
<dbReference type="InterPro" id="IPR000534">
    <property type="entry name" value="Semialdehyde_DH_NAD-bd"/>
</dbReference>
<dbReference type="NCBIfam" id="TIGR01851">
    <property type="entry name" value="argC_other"/>
    <property type="match status" value="1"/>
</dbReference>
<dbReference type="PANTHER" id="PTHR32338:SF10">
    <property type="entry name" value="N-ACETYL-GAMMA-GLUTAMYL-PHOSPHATE REDUCTASE, CHLOROPLASTIC-RELATED"/>
    <property type="match status" value="1"/>
</dbReference>
<dbReference type="PANTHER" id="PTHR32338">
    <property type="entry name" value="N-ACETYL-GAMMA-GLUTAMYL-PHOSPHATE REDUCTASE, CHLOROPLASTIC-RELATED-RELATED"/>
    <property type="match status" value="1"/>
</dbReference>
<dbReference type="Pfam" id="PF01118">
    <property type="entry name" value="Semialdhyde_dh"/>
    <property type="match status" value="1"/>
</dbReference>
<dbReference type="Pfam" id="PF22698">
    <property type="entry name" value="Semialdhyde_dhC_1"/>
    <property type="match status" value="1"/>
</dbReference>
<dbReference type="SMART" id="SM00859">
    <property type="entry name" value="Semialdhyde_dh"/>
    <property type="match status" value="1"/>
</dbReference>
<dbReference type="SUPFAM" id="SSF55347">
    <property type="entry name" value="Glyceraldehyde-3-phosphate dehydrogenase-like, C-terminal domain"/>
    <property type="match status" value="1"/>
</dbReference>
<dbReference type="SUPFAM" id="SSF51735">
    <property type="entry name" value="NAD(P)-binding Rossmann-fold domains"/>
    <property type="match status" value="1"/>
</dbReference>
<dbReference type="PROSITE" id="PS01224">
    <property type="entry name" value="ARGC"/>
    <property type="match status" value="1"/>
</dbReference>
<keyword id="KW-0028">Amino-acid biosynthesis</keyword>
<keyword id="KW-0055">Arginine biosynthesis</keyword>
<keyword id="KW-0963">Cytoplasm</keyword>
<keyword id="KW-0521">NADP</keyword>
<keyword id="KW-0560">Oxidoreductase</keyword>
<feature type="chain" id="PRO_0000112504" description="N-acetyl-gamma-glutamyl-phosphate reductase">
    <location>
        <begin position="1"/>
        <end position="310"/>
    </location>
</feature>
<feature type="active site" evidence="1">
    <location>
        <position position="117"/>
    </location>
</feature>
<protein>
    <recommendedName>
        <fullName evidence="1">N-acetyl-gamma-glutamyl-phosphate reductase</fullName>
        <shortName evidence="1">AGPR</shortName>
        <ecNumber evidence="1">1.2.1.38</ecNumber>
    </recommendedName>
    <alternativeName>
        <fullName evidence="1">N-acetyl-glutamate semialdehyde dehydrogenase</fullName>
        <shortName evidence="1">NAGSA dehydrogenase</shortName>
    </alternativeName>
</protein>
<name>ARGC_BRUME</name>
<evidence type="ECO:0000255" key="1">
    <source>
        <dbReference type="HAMAP-Rule" id="MF_01110"/>
    </source>
</evidence>
<reference key="1">
    <citation type="journal article" date="2002" name="Proc. Natl. Acad. Sci. U.S.A.">
        <title>The genome sequence of the facultative intracellular pathogen Brucella melitensis.</title>
        <authorList>
            <person name="DelVecchio V.G."/>
            <person name="Kapatral V."/>
            <person name="Redkar R.J."/>
            <person name="Patra G."/>
            <person name="Mujer C."/>
            <person name="Los T."/>
            <person name="Ivanova N."/>
            <person name="Anderson I."/>
            <person name="Bhattacharyya A."/>
            <person name="Lykidis A."/>
            <person name="Reznik G."/>
            <person name="Jablonski L."/>
            <person name="Larsen N."/>
            <person name="D'Souza M."/>
            <person name="Bernal A."/>
            <person name="Mazur M."/>
            <person name="Goltsman E."/>
            <person name="Selkov E."/>
            <person name="Elzer P.H."/>
            <person name="Hagius S."/>
            <person name="O'Callaghan D."/>
            <person name="Letesson J.-J."/>
            <person name="Haselkorn R."/>
            <person name="Kyrpides N.C."/>
            <person name="Overbeek R."/>
        </authorList>
    </citation>
    <scope>NUCLEOTIDE SEQUENCE [LARGE SCALE GENOMIC DNA]</scope>
    <source>
        <strain>ATCC 23456 / CCUG 17765 / NCTC 10094 / 16M</strain>
    </source>
</reference>
<sequence>MKPKIFIDGEHGTTGLQIRTRLAERDDLEVISIPEAERRNKDLRADYLRAADIAILCLPDDASKEAVSLLEGHNSTRIIDTSTTHRVHPDWAYGFAELAKGQRERIAEARLVANPGCYPTGAIALVRPLRDAGLLPADYPVSVNAVSGYTGGGKQLIAQMEDRNHPDYLAANNFLYGLPLKHKHVPELQLHGRLDRRPIFSPSVGRFPQGMIVQVPLFLSELEGSPSLAKVHAVLTEHYAGQDIVEVVPLEESAKLPRVDAEELAGKDGMKLFVFGTEDHGQVNLVALLDNLGKGASGAAVQNMNLMLGK</sequence>
<gene>
    <name evidence="1" type="primary">argC</name>
    <name type="ordered locus">BMEI1171</name>
</gene>